<comment type="function">
    <text evidence="1">Required for the localization of dynein and dynactin to the mitotic kintochore. Dynein is believed to control the initial lateral interaction between the kinetochore and spindle microtubules and to facilitate the subsequent formation of end-on kinetochore-microtubule attachments mediated by the NDC80 complex.</text>
</comment>
<comment type="subcellular location">
    <subcellularLocation>
        <location evidence="1">Chromosome</location>
        <location evidence="1">Centromere</location>
        <location evidence="1">Kinetochore</location>
    </subcellularLocation>
</comment>
<comment type="similarity">
    <text evidence="1">Belongs to the Spindly family.</text>
</comment>
<gene>
    <name type="primary">spdl1-a</name>
    <name type="synonym">ccdc99-a</name>
</gene>
<organism>
    <name type="scientific">Xenopus laevis</name>
    <name type="common">African clawed frog</name>
    <dbReference type="NCBI Taxonomy" id="8355"/>
    <lineage>
        <taxon>Eukaryota</taxon>
        <taxon>Metazoa</taxon>
        <taxon>Chordata</taxon>
        <taxon>Craniata</taxon>
        <taxon>Vertebrata</taxon>
        <taxon>Euteleostomi</taxon>
        <taxon>Amphibia</taxon>
        <taxon>Batrachia</taxon>
        <taxon>Anura</taxon>
        <taxon>Pipoidea</taxon>
        <taxon>Pipidae</taxon>
        <taxon>Xenopodinae</taxon>
        <taxon>Xenopus</taxon>
        <taxon>Xenopus</taxon>
    </lineage>
</organism>
<evidence type="ECO:0000255" key="1">
    <source>
        <dbReference type="HAMAP-Rule" id="MF_03041"/>
    </source>
</evidence>
<evidence type="ECO:0000256" key="2">
    <source>
        <dbReference type="SAM" id="MobiDB-lite"/>
    </source>
</evidence>
<reference key="1">
    <citation type="submission" date="2005-03" db="EMBL/GenBank/DDBJ databases">
        <authorList>
            <consortium name="NIH - Xenopus Gene Collection (XGC) project"/>
        </authorList>
    </citation>
    <scope>NUCLEOTIDE SEQUENCE [LARGE SCALE MRNA]</scope>
    <source>
        <tissue>Egg</tissue>
    </source>
</reference>
<name>SPDLA_XENLA</name>
<sequence>MEESETVLKLRRQLKEAEEERVKAAHYGLELLESQSDLQNQLEEQRNEMTGTIENLEQEKYSLQREVELKNRMLESVTSECENIRQQQKLILEQLQEQLERNHHRELGEIKDKLEKLKAELDEARLSEKQLKHKLEYQTEVLANKSEELRMMSERVHETMSSEMLTLQLEKTELESAKANLEQEVNELQYREQQLLLTNGTQSRKLEHLQTEKEEREKESVGYFSALEKAREANQDLQAQLDIALQQAQDPNSKGNSLFSEVEDRRAEMERQLISMKVQFQSLQKQHAFSRQQMHRMKVQIATLLQMKGSQSDPEQLERLQAMVAQKNSEIEALVMKVRQLEKSQQVSENGPAVGSSDNLGQGDETYYVDLLKMKLLNSSKENEKIKDELSLQRMKALAESQRVLELERKLFANDRHLKLSQGENMKLRVSLDEIKMKYEPDEMGKIHTQKRRKEQLPLDFPMDNTSAAVTSGTEAQGLYDATAGETCTAESTDGRIHSKEDLSLSTKEQDPSSVAVKPKELPNGPPPKERKRVRIMEDENNAQDLNKRNTHNCSVTSASPRSTSEDATSESKRFDEEQEKRKQERKSRLRAPPVLHVPSKPNATTQCPQQ</sequence>
<proteinExistence type="evidence at transcript level"/>
<accession>Q5BIX7</accession>
<feature type="chain" id="PRO_0000383343" description="Protein Spindly-A">
    <location>
        <begin position="1"/>
        <end position="611"/>
    </location>
</feature>
<feature type="region of interest" description="Disordered" evidence="2">
    <location>
        <begin position="487"/>
        <end position="611"/>
    </location>
</feature>
<feature type="coiled-coil region" evidence="1">
    <location>
        <begin position="1"/>
        <end position="390"/>
    </location>
</feature>
<feature type="compositionally biased region" description="Basic and acidic residues" evidence="2">
    <location>
        <begin position="493"/>
        <end position="511"/>
    </location>
</feature>
<feature type="compositionally biased region" description="Polar residues" evidence="2">
    <location>
        <begin position="552"/>
        <end position="567"/>
    </location>
</feature>
<feature type="compositionally biased region" description="Basic and acidic residues" evidence="2">
    <location>
        <begin position="570"/>
        <end position="583"/>
    </location>
</feature>
<feature type="compositionally biased region" description="Polar residues" evidence="2">
    <location>
        <begin position="602"/>
        <end position="611"/>
    </location>
</feature>
<protein>
    <recommendedName>
        <fullName evidence="1">Protein Spindly-A</fullName>
    </recommendedName>
    <alternativeName>
        <fullName evidence="1">Coiled-coil domain-containing protein 99-A</fullName>
    </alternativeName>
    <alternativeName>
        <fullName evidence="1">Spindle apparatus coiled-coil domain-containing protein 1-A</fullName>
    </alternativeName>
</protein>
<dbReference type="EMBL" id="BC091716">
    <property type="protein sequence ID" value="AAH91716.1"/>
    <property type="molecule type" value="mRNA"/>
</dbReference>
<dbReference type="RefSeq" id="NP_001089308.1">
    <property type="nucleotide sequence ID" value="NM_001095839.1"/>
</dbReference>
<dbReference type="SMR" id="Q5BIX7"/>
<dbReference type="DNASU" id="734358"/>
<dbReference type="GeneID" id="734358"/>
<dbReference type="KEGG" id="xla:734358"/>
<dbReference type="AGR" id="Xenbase:XB-GENE-5754977"/>
<dbReference type="CTD" id="734358"/>
<dbReference type="Xenbase" id="XB-GENE-5754977">
    <property type="gene designation" value="spdl1.L"/>
</dbReference>
<dbReference type="OrthoDB" id="2121607at2759"/>
<dbReference type="Proteomes" id="UP000186698">
    <property type="component" value="Chromosome 3L"/>
</dbReference>
<dbReference type="Bgee" id="734358">
    <property type="expression patterns" value="Expressed in egg cell and 19 other cell types or tissues"/>
</dbReference>
<dbReference type="GO" id="GO:0005634">
    <property type="term" value="C:nucleus"/>
    <property type="evidence" value="ECO:0000250"/>
    <property type="project" value="UniProtKB"/>
</dbReference>
<dbReference type="GO" id="GO:0000940">
    <property type="term" value="C:outer kinetochore"/>
    <property type="evidence" value="ECO:0000250"/>
    <property type="project" value="UniProtKB"/>
</dbReference>
<dbReference type="GO" id="GO:0000922">
    <property type="term" value="C:spindle pole"/>
    <property type="evidence" value="ECO:0000250"/>
    <property type="project" value="UniProtKB"/>
</dbReference>
<dbReference type="GO" id="GO:0043515">
    <property type="term" value="F:kinetochore binding"/>
    <property type="evidence" value="ECO:0000250"/>
    <property type="project" value="UniProtKB"/>
</dbReference>
<dbReference type="GO" id="GO:0051301">
    <property type="term" value="P:cell division"/>
    <property type="evidence" value="ECO:0007669"/>
    <property type="project" value="UniProtKB-KW"/>
</dbReference>
<dbReference type="GO" id="GO:0000132">
    <property type="term" value="P:establishment of mitotic spindle orientation"/>
    <property type="evidence" value="ECO:0000250"/>
    <property type="project" value="UniProtKB"/>
</dbReference>
<dbReference type="GO" id="GO:0007080">
    <property type="term" value="P:mitotic metaphase chromosome alignment"/>
    <property type="evidence" value="ECO:0000250"/>
    <property type="project" value="UniProtKB"/>
</dbReference>
<dbReference type="GO" id="GO:0007094">
    <property type="term" value="P:mitotic spindle assembly checkpoint signaling"/>
    <property type="evidence" value="ECO:0007669"/>
    <property type="project" value="InterPro"/>
</dbReference>
<dbReference type="GO" id="GO:0034501">
    <property type="term" value="P:protein localization to kinetochore"/>
    <property type="evidence" value="ECO:0000250"/>
    <property type="project" value="UniProtKB"/>
</dbReference>
<dbReference type="HAMAP" id="MF_03041">
    <property type="entry name" value="SPDLY"/>
    <property type="match status" value="1"/>
</dbReference>
<dbReference type="InterPro" id="IPR028593">
    <property type="entry name" value="SPDLY_chordates"/>
</dbReference>
<dbReference type="InterPro" id="IPR051149">
    <property type="entry name" value="Spindly/BICDR_Dynein_Adapter"/>
</dbReference>
<dbReference type="PANTHER" id="PTHR32123">
    <property type="entry name" value="BICD FAMILY-LIKE CARGO ADAPTER"/>
    <property type="match status" value="1"/>
</dbReference>
<dbReference type="PANTHER" id="PTHR32123:SF9">
    <property type="entry name" value="PROTEIN SPINDLY"/>
    <property type="match status" value="1"/>
</dbReference>
<keyword id="KW-0131">Cell cycle</keyword>
<keyword id="KW-0132">Cell division</keyword>
<keyword id="KW-0137">Centromere</keyword>
<keyword id="KW-0158">Chromosome</keyword>
<keyword id="KW-0175">Coiled coil</keyword>
<keyword id="KW-0995">Kinetochore</keyword>
<keyword id="KW-0498">Mitosis</keyword>
<keyword id="KW-1185">Reference proteome</keyword>